<gene>
    <name type="ordered locus">Sfri_3689</name>
</gene>
<proteinExistence type="inferred from homology"/>
<reference key="1">
    <citation type="submission" date="2006-08" db="EMBL/GenBank/DDBJ databases">
        <title>Complete sequence of Shewanella frigidimarina NCIMB 400.</title>
        <authorList>
            <consortium name="US DOE Joint Genome Institute"/>
            <person name="Copeland A."/>
            <person name="Lucas S."/>
            <person name="Lapidus A."/>
            <person name="Barry K."/>
            <person name="Detter J.C."/>
            <person name="Glavina del Rio T."/>
            <person name="Hammon N."/>
            <person name="Israni S."/>
            <person name="Dalin E."/>
            <person name="Tice H."/>
            <person name="Pitluck S."/>
            <person name="Fredrickson J.K."/>
            <person name="Kolker E."/>
            <person name="McCuel L.A."/>
            <person name="DiChristina T."/>
            <person name="Nealson K.H."/>
            <person name="Newman D."/>
            <person name="Tiedje J.M."/>
            <person name="Zhou J."/>
            <person name="Romine M.F."/>
            <person name="Culley D.E."/>
            <person name="Serres M."/>
            <person name="Chertkov O."/>
            <person name="Brettin T."/>
            <person name="Bruce D."/>
            <person name="Han C."/>
            <person name="Tapia R."/>
            <person name="Gilna P."/>
            <person name="Schmutz J."/>
            <person name="Larimer F."/>
            <person name="Land M."/>
            <person name="Hauser L."/>
            <person name="Kyrpides N."/>
            <person name="Mikhailova N."/>
            <person name="Richardson P."/>
        </authorList>
    </citation>
    <scope>NUCLEOTIDE SEQUENCE [LARGE SCALE GENOMIC DNA]</scope>
    <source>
        <strain>NCIMB 400</strain>
    </source>
</reference>
<reference key="2">
    <citation type="journal article" date="1992" name="Biochemistry">
        <title>Sequence of the gene encoding flavocytochrome c from Shewanella putrefaciens: a tetraheme flavoenzyme that is a soluble fumarate reductase related to the membrane-bound enzymes from other bacteria.</title>
        <authorList>
            <person name="Pealing S.L."/>
            <person name="Black A.C."/>
            <person name="Manson F.D.C."/>
            <person name="Ward F.B."/>
            <person name="Chapman S.K."/>
            <person name="Reid G.A."/>
        </authorList>
    </citation>
    <scope>NUCLEOTIDE SEQUENCE [GENOMIC DNA] OF 1-122</scope>
</reference>
<name>Y3689_SHEFN</name>
<dbReference type="EC" id="2.7.13.3"/>
<dbReference type="EMBL" id="CP000447">
    <property type="protein sequence ID" value="ABI73516.1"/>
    <property type="molecule type" value="Genomic_DNA"/>
</dbReference>
<dbReference type="EMBL" id="L04283">
    <property type="protein sequence ID" value="AAA70384.1"/>
    <property type="molecule type" value="Genomic_DNA"/>
</dbReference>
<dbReference type="RefSeq" id="WP_011639104.1">
    <property type="nucleotide sequence ID" value="NC_008345.1"/>
</dbReference>
<dbReference type="SMR" id="Q02482"/>
<dbReference type="STRING" id="318167.Sfri_3689"/>
<dbReference type="KEGG" id="sfr:Sfri_3689"/>
<dbReference type="eggNOG" id="COG0834">
    <property type="taxonomic scope" value="Bacteria"/>
</dbReference>
<dbReference type="eggNOG" id="COG4191">
    <property type="taxonomic scope" value="Bacteria"/>
</dbReference>
<dbReference type="HOGENOM" id="CLU_000445_114_69_6"/>
<dbReference type="OrthoDB" id="9772100at2"/>
<dbReference type="Proteomes" id="UP000000684">
    <property type="component" value="Chromosome"/>
</dbReference>
<dbReference type="GO" id="GO:0005886">
    <property type="term" value="C:plasma membrane"/>
    <property type="evidence" value="ECO:0007669"/>
    <property type="project" value="UniProtKB-SubCell"/>
</dbReference>
<dbReference type="GO" id="GO:0005524">
    <property type="term" value="F:ATP binding"/>
    <property type="evidence" value="ECO:0007669"/>
    <property type="project" value="UniProtKB-KW"/>
</dbReference>
<dbReference type="GO" id="GO:0000155">
    <property type="term" value="F:phosphorelay sensor kinase activity"/>
    <property type="evidence" value="ECO:0007669"/>
    <property type="project" value="InterPro"/>
</dbReference>
<dbReference type="CDD" id="cd00082">
    <property type="entry name" value="HisKA"/>
    <property type="match status" value="1"/>
</dbReference>
<dbReference type="CDD" id="cd13704">
    <property type="entry name" value="PBP2_HisK"/>
    <property type="match status" value="1"/>
</dbReference>
<dbReference type="Gene3D" id="1.10.287.130">
    <property type="match status" value="1"/>
</dbReference>
<dbReference type="Gene3D" id="3.30.565.10">
    <property type="entry name" value="Histidine kinase-like ATPase, C-terminal domain"/>
    <property type="match status" value="1"/>
</dbReference>
<dbReference type="Gene3D" id="3.40.190.10">
    <property type="entry name" value="Periplasmic binding protein-like II"/>
    <property type="match status" value="2"/>
</dbReference>
<dbReference type="InterPro" id="IPR036890">
    <property type="entry name" value="HATPase_C_sf"/>
</dbReference>
<dbReference type="InterPro" id="IPR005467">
    <property type="entry name" value="His_kinase_dom"/>
</dbReference>
<dbReference type="InterPro" id="IPR003661">
    <property type="entry name" value="HisK_dim/P_dom"/>
</dbReference>
<dbReference type="InterPro" id="IPR036097">
    <property type="entry name" value="HisK_dim/P_sf"/>
</dbReference>
<dbReference type="InterPro" id="IPR004358">
    <property type="entry name" value="Sig_transdc_His_kin-like_C"/>
</dbReference>
<dbReference type="InterPro" id="IPR001638">
    <property type="entry name" value="Solute-binding_3/MltF_N"/>
</dbReference>
<dbReference type="PANTHER" id="PTHR43065">
    <property type="entry name" value="SENSOR HISTIDINE KINASE"/>
    <property type="match status" value="1"/>
</dbReference>
<dbReference type="PANTHER" id="PTHR43065:SF42">
    <property type="entry name" value="TWO-COMPONENT SENSOR PPRA"/>
    <property type="match status" value="1"/>
</dbReference>
<dbReference type="Pfam" id="PF02518">
    <property type="entry name" value="HATPase_c"/>
    <property type="match status" value="1"/>
</dbReference>
<dbReference type="Pfam" id="PF00497">
    <property type="entry name" value="SBP_bac_3"/>
    <property type="match status" value="1"/>
</dbReference>
<dbReference type="PRINTS" id="PR00344">
    <property type="entry name" value="BCTRLSENSOR"/>
</dbReference>
<dbReference type="SMART" id="SM00387">
    <property type="entry name" value="HATPase_c"/>
    <property type="match status" value="1"/>
</dbReference>
<dbReference type="SMART" id="SM00062">
    <property type="entry name" value="PBPb"/>
    <property type="match status" value="1"/>
</dbReference>
<dbReference type="SUPFAM" id="SSF55874">
    <property type="entry name" value="ATPase domain of HSP90 chaperone/DNA topoisomerase II/histidine kinase"/>
    <property type="match status" value="1"/>
</dbReference>
<dbReference type="SUPFAM" id="SSF47384">
    <property type="entry name" value="Homodimeric domain of signal transducing histidine kinase"/>
    <property type="match status" value="1"/>
</dbReference>
<dbReference type="SUPFAM" id="SSF53850">
    <property type="entry name" value="Periplasmic binding protein-like II"/>
    <property type="match status" value="1"/>
</dbReference>
<dbReference type="PROSITE" id="PS50109">
    <property type="entry name" value="HIS_KIN"/>
    <property type="match status" value="1"/>
</dbReference>
<sequence length="655" mass="73220">MKTLLLLLIIITMPVLAQDSIVFGVHSKTAPLEWRNNGVDQGFNIELMDRIGQLTNKRIIVRRKSFQQLVKDVHDPDSDIDVIAVVSPVNMDRKLAQSDPIYATHAKAYTLQGKALINNWADLVGKRVAIKNGAFVDVFLSDHLQNFDRVDVDLYETGFQLLIKNQVDVVIAESFVARRLLPLYPSVRSSSDALIYGAFNFVANETKTELMYQINEALRQLKLSGEYDKLVNKWFGTGREKVDLTSSEKRMFALAILVAIMSAIGMIFTGFISASLRRHTKALDAELIQRKRIEVEISELSQQFQSVLDGLPNGVTIVNQELQHLWSNDNNIHLLDSDEFYYVDNNVFKLKAAVLEVLSTQKSFTADMRYQQQFWQLQIHPIANNQVVILLEESTEQHRLRQANEEASRLASLGELSAGIAHEINNPTGLIVHAVSLFTAAMKDLTPAAKHYQKQNPFWLIAGLNPDIAIEELQYSCGSIEEGAKRISRIVNDLKRYAMPHIADQYTLVSLNDVVQVAQRLTANQTKSHQISTMLCDPSPCITGDAQQLHQVLINLIQNACNACSTQPGIIVIDTHVANNMAILSIKDNGCGMDSATLKRITEPFFTTRRNEGGSGLGLSVCSKIIKEHQGEMQIQSTLGKGTQIRLIFALAQQD</sequence>
<keyword id="KW-0067">ATP-binding</keyword>
<keyword id="KW-1003">Cell membrane</keyword>
<keyword id="KW-0418">Kinase</keyword>
<keyword id="KW-0472">Membrane</keyword>
<keyword id="KW-0547">Nucleotide-binding</keyword>
<keyword id="KW-0597">Phosphoprotein</keyword>
<keyword id="KW-1185">Reference proteome</keyword>
<keyword id="KW-0732">Signal</keyword>
<keyword id="KW-0808">Transferase</keyword>
<keyword id="KW-0812">Transmembrane</keyword>
<keyword id="KW-1133">Transmembrane helix</keyword>
<protein>
    <recommendedName>
        <fullName>Putative sensor protein Sfri_3689</fullName>
        <ecNumber>2.7.13.3</ecNumber>
    </recommendedName>
</protein>
<feature type="signal peptide" evidence="1">
    <location>
        <begin position="1"/>
        <end position="17"/>
    </location>
</feature>
<feature type="chain" id="PRO_0000066207" description="Putative sensor protein Sfri_3689">
    <location>
        <begin position="18"/>
        <end position="655"/>
    </location>
</feature>
<feature type="transmembrane region" description="Helical" evidence="1">
    <location>
        <begin position="252"/>
        <end position="272"/>
    </location>
</feature>
<feature type="domain" description="Histidine kinase" evidence="2">
    <location>
        <begin position="419"/>
        <end position="653"/>
    </location>
</feature>
<feature type="modified residue" description="Phosphohistidine; by autocatalysis" evidence="2">
    <location>
        <position position="422"/>
    </location>
</feature>
<accession>Q02482</accession>
<accession>Q07WU8</accession>
<organism>
    <name type="scientific">Shewanella frigidimarina (strain NCIMB 400)</name>
    <dbReference type="NCBI Taxonomy" id="318167"/>
    <lineage>
        <taxon>Bacteria</taxon>
        <taxon>Pseudomonadati</taxon>
        <taxon>Pseudomonadota</taxon>
        <taxon>Gammaproteobacteria</taxon>
        <taxon>Alteromonadales</taxon>
        <taxon>Shewanellaceae</taxon>
        <taxon>Shewanella</taxon>
    </lineage>
</organism>
<comment type="catalytic activity">
    <reaction>
        <text>ATP + protein L-histidine = ADP + protein N-phospho-L-histidine.</text>
        <dbReference type="EC" id="2.7.13.3"/>
    </reaction>
</comment>
<comment type="subcellular location">
    <subcellularLocation>
        <location evidence="3">Cell membrane</location>
        <topology evidence="3">Single-pass membrane protein</topology>
    </subcellularLocation>
</comment>
<evidence type="ECO:0000255" key="1"/>
<evidence type="ECO:0000255" key="2">
    <source>
        <dbReference type="PROSITE-ProRule" id="PRU00107"/>
    </source>
</evidence>
<evidence type="ECO:0000305" key="3"/>